<keyword id="KW-1185">Reference proteome</keyword>
<keyword id="KW-0687">Ribonucleoprotein</keyword>
<keyword id="KW-0689">Ribosomal protein</keyword>
<evidence type="ECO:0000255" key="1">
    <source>
        <dbReference type="HAMAP-Rule" id="MF_00508"/>
    </source>
</evidence>
<evidence type="ECO:0000305" key="2"/>
<proteinExistence type="inferred from homology"/>
<sequence>MANKKIRIRLKAYEHRTLDTAAEKIVETATRTGASVAGPVPLPTERSLYTVIRATHKYKDSREQFEMRTHKRLIDIVNPTQKTVDALMKLDLPSGVNVEIKL</sequence>
<name>RS10_STRMU</name>
<comment type="function">
    <text evidence="1">Involved in the binding of tRNA to the ribosomes.</text>
</comment>
<comment type="subunit">
    <text evidence="1">Part of the 30S ribosomal subunit.</text>
</comment>
<comment type="similarity">
    <text evidence="1">Belongs to the universal ribosomal protein uS10 family.</text>
</comment>
<comment type="sequence caution" evidence="2">
    <conflict type="erroneous initiation">
        <sequence resource="EMBL-CDS" id="AAN59629"/>
    </conflict>
</comment>
<protein>
    <recommendedName>
        <fullName evidence="1">Small ribosomal subunit protein uS10</fullName>
    </recommendedName>
    <alternativeName>
        <fullName evidence="2">30S ribosomal protein S10</fullName>
    </alternativeName>
</protein>
<organism>
    <name type="scientific">Streptococcus mutans serotype c (strain ATCC 700610 / UA159)</name>
    <dbReference type="NCBI Taxonomy" id="210007"/>
    <lineage>
        <taxon>Bacteria</taxon>
        <taxon>Bacillati</taxon>
        <taxon>Bacillota</taxon>
        <taxon>Bacilli</taxon>
        <taxon>Lactobacillales</taxon>
        <taxon>Streptococcaceae</taxon>
        <taxon>Streptococcus</taxon>
    </lineage>
</organism>
<accession>P48853</accession>
<reference key="1">
    <citation type="submission" date="1994-03" db="EMBL/GenBank/DDBJ databases">
        <authorList>
            <person name="Kuramitsu H.K."/>
            <person name="Shibata Y."/>
        </authorList>
    </citation>
    <scope>NUCLEOTIDE SEQUENCE [GENOMIC DNA]</scope>
    <source>
        <strain>GS-5</strain>
    </source>
</reference>
<reference key="2">
    <citation type="journal article" date="2002" name="Proc. Natl. Acad. Sci. U.S.A.">
        <title>Genome sequence of Streptococcus mutans UA159, a cariogenic dental pathogen.</title>
        <authorList>
            <person name="Ajdic D.J."/>
            <person name="McShan W.M."/>
            <person name="McLaughlin R.E."/>
            <person name="Savic G."/>
            <person name="Chang J."/>
            <person name="Carson M.B."/>
            <person name="Primeaux C."/>
            <person name="Tian R."/>
            <person name="Kenton S."/>
            <person name="Jia H.G."/>
            <person name="Lin S.P."/>
            <person name="Qian Y."/>
            <person name="Li S."/>
            <person name="Zhu H."/>
            <person name="Najar F.Z."/>
            <person name="Lai H."/>
            <person name="White J."/>
            <person name="Roe B.A."/>
            <person name="Ferretti J.J."/>
        </authorList>
    </citation>
    <scope>NUCLEOTIDE SEQUENCE [LARGE SCALE GENOMIC DNA]</scope>
    <source>
        <strain>ATCC 700610 / UA159</strain>
    </source>
</reference>
<dbReference type="EMBL" id="L29637">
    <property type="protein sequence ID" value="AAB46363.1"/>
    <property type="molecule type" value="Genomic_DNA"/>
</dbReference>
<dbReference type="EMBL" id="AE014133">
    <property type="protein sequence ID" value="AAN59629.1"/>
    <property type="status" value="ALT_INIT"/>
    <property type="molecule type" value="Genomic_DNA"/>
</dbReference>
<dbReference type="RefSeq" id="NP_722323.1">
    <property type="nucleotide sequence ID" value="NC_004350.2"/>
</dbReference>
<dbReference type="RefSeq" id="WP_002262341.1">
    <property type="nucleotide sequence ID" value="NC_004350.2"/>
</dbReference>
<dbReference type="SMR" id="P48853"/>
<dbReference type="STRING" id="210007.SMU_2026c"/>
<dbReference type="GeneID" id="93860230"/>
<dbReference type="KEGG" id="smu:SMU_2026c"/>
<dbReference type="PATRIC" id="fig|210007.7.peg.1806"/>
<dbReference type="eggNOG" id="COG0051">
    <property type="taxonomic scope" value="Bacteria"/>
</dbReference>
<dbReference type="HOGENOM" id="CLU_122625_4_2_9"/>
<dbReference type="OrthoDB" id="9804464at2"/>
<dbReference type="Proteomes" id="UP000002512">
    <property type="component" value="Chromosome"/>
</dbReference>
<dbReference type="GO" id="GO:1990904">
    <property type="term" value="C:ribonucleoprotein complex"/>
    <property type="evidence" value="ECO:0007669"/>
    <property type="project" value="UniProtKB-KW"/>
</dbReference>
<dbReference type="GO" id="GO:0005840">
    <property type="term" value="C:ribosome"/>
    <property type="evidence" value="ECO:0007669"/>
    <property type="project" value="UniProtKB-KW"/>
</dbReference>
<dbReference type="GO" id="GO:0003735">
    <property type="term" value="F:structural constituent of ribosome"/>
    <property type="evidence" value="ECO:0007669"/>
    <property type="project" value="InterPro"/>
</dbReference>
<dbReference type="GO" id="GO:0000049">
    <property type="term" value="F:tRNA binding"/>
    <property type="evidence" value="ECO:0007669"/>
    <property type="project" value="UniProtKB-UniRule"/>
</dbReference>
<dbReference type="GO" id="GO:0006412">
    <property type="term" value="P:translation"/>
    <property type="evidence" value="ECO:0007669"/>
    <property type="project" value="UniProtKB-UniRule"/>
</dbReference>
<dbReference type="FunFam" id="3.30.70.600:FF:000001">
    <property type="entry name" value="30S ribosomal protein S10"/>
    <property type="match status" value="1"/>
</dbReference>
<dbReference type="Gene3D" id="3.30.70.600">
    <property type="entry name" value="Ribosomal protein S10 domain"/>
    <property type="match status" value="1"/>
</dbReference>
<dbReference type="HAMAP" id="MF_00508">
    <property type="entry name" value="Ribosomal_uS10"/>
    <property type="match status" value="1"/>
</dbReference>
<dbReference type="InterPro" id="IPR001848">
    <property type="entry name" value="Ribosomal_uS10"/>
</dbReference>
<dbReference type="InterPro" id="IPR018268">
    <property type="entry name" value="Ribosomal_uS10_CS"/>
</dbReference>
<dbReference type="InterPro" id="IPR027486">
    <property type="entry name" value="Ribosomal_uS10_dom"/>
</dbReference>
<dbReference type="InterPro" id="IPR036838">
    <property type="entry name" value="Ribosomal_uS10_dom_sf"/>
</dbReference>
<dbReference type="NCBIfam" id="NF001861">
    <property type="entry name" value="PRK00596.1"/>
    <property type="match status" value="1"/>
</dbReference>
<dbReference type="NCBIfam" id="TIGR01049">
    <property type="entry name" value="rpsJ_bact"/>
    <property type="match status" value="1"/>
</dbReference>
<dbReference type="PANTHER" id="PTHR11700">
    <property type="entry name" value="30S RIBOSOMAL PROTEIN S10 FAMILY MEMBER"/>
    <property type="match status" value="1"/>
</dbReference>
<dbReference type="Pfam" id="PF00338">
    <property type="entry name" value="Ribosomal_S10"/>
    <property type="match status" value="1"/>
</dbReference>
<dbReference type="PRINTS" id="PR00971">
    <property type="entry name" value="RIBOSOMALS10"/>
</dbReference>
<dbReference type="SMART" id="SM01403">
    <property type="entry name" value="Ribosomal_S10"/>
    <property type="match status" value="1"/>
</dbReference>
<dbReference type="SUPFAM" id="SSF54999">
    <property type="entry name" value="Ribosomal protein S10"/>
    <property type="match status" value="1"/>
</dbReference>
<dbReference type="PROSITE" id="PS00361">
    <property type="entry name" value="RIBOSOMAL_S10"/>
    <property type="match status" value="1"/>
</dbReference>
<gene>
    <name evidence="1" type="primary">rpsJ</name>
    <name type="ordered locus">SMU_2026c</name>
</gene>
<feature type="chain" id="PRO_0000146606" description="Small ribosomal subunit protein uS10">
    <location>
        <begin position="1"/>
        <end position="102"/>
    </location>
</feature>